<sequence>MRTLFLIDGEHYPPVVLDAMRRVREQLGAKGVAAAFLGGTEKIGEGADYGLPLVAAEDPVSAVRQALERYGVEAVVDLSDEPVVGYRERMRIASLALAAGARYVGSDFELRPPEMRRVPGKPSLAVIGTGKRVGKTAVTGYLARLLDREGFRPAVVSMGRGGPPEPEVLEGRRLEVGSDYLLRALERGAHAASDYYETAALSRVTTVGCRRCGGGLAGEPFVSNVLEGARIAAGLDTGITVFDGSGAAIPPVEVDRRVLVAGAHQDPEYVAGYLGAYRLLISDLLVLTMAEEPMAPPGRVEELVRRVREVRPDLPVIPAVFRPRPVGEVRGMRVAYVSTAPPAVLKRLAGHLEEGYGCEVVAVSGNLSNRSKLAEDLEGMPGVDAYLTEIKAAAVDVVTRRGAEEGRRVIYCDNDPVAEGLDGALLRLARAAGRGRSGDRGV</sequence>
<gene>
    <name evidence="1" type="primary">cpgS</name>
    <name type="ordered locus">Rxyl_1657</name>
</gene>
<accession>Q1AVG0</accession>
<protein>
    <recommendedName>
        <fullName evidence="1">Cyclic 2,3-diphosphoglycerate synthetase</fullName>
        <shortName evidence="1">cDPGS</shortName>
        <ecNumber evidence="1">6.5.1.9</ecNumber>
    </recommendedName>
</protein>
<organism>
    <name type="scientific">Rubrobacter xylanophilus (strain DSM 9941 / JCM 11954 / NBRC 16129 / PRD-1)</name>
    <dbReference type="NCBI Taxonomy" id="266117"/>
    <lineage>
        <taxon>Bacteria</taxon>
        <taxon>Bacillati</taxon>
        <taxon>Actinomycetota</taxon>
        <taxon>Rubrobacteria</taxon>
        <taxon>Rubrobacterales</taxon>
        <taxon>Rubrobacteraceae</taxon>
        <taxon>Rubrobacter</taxon>
    </lineage>
</organism>
<evidence type="ECO:0000255" key="1">
    <source>
        <dbReference type="HAMAP-Rule" id="MF_01908"/>
    </source>
</evidence>
<feature type="chain" id="PRO_0000313688" description="Cyclic 2,3-diphosphoglycerate synthetase">
    <location>
        <begin position="1"/>
        <end position="442"/>
    </location>
</feature>
<dbReference type="EC" id="6.5.1.9" evidence="1"/>
<dbReference type="EMBL" id="CP000386">
    <property type="protein sequence ID" value="ABG04618.1"/>
    <property type="molecule type" value="Genomic_DNA"/>
</dbReference>
<dbReference type="RefSeq" id="WP_011564635.1">
    <property type="nucleotide sequence ID" value="NC_008148.1"/>
</dbReference>
<dbReference type="SMR" id="Q1AVG0"/>
<dbReference type="STRING" id="266117.Rxyl_1657"/>
<dbReference type="KEGG" id="rxy:Rxyl_1657"/>
<dbReference type="eggNOG" id="COG2403">
    <property type="taxonomic scope" value="Bacteria"/>
</dbReference>
<dbReference type="HOGENOM" id="CLU_638764_0_0_11"/>
<dbReference type="PhylomeDB" id="Q1AVG0"/>
<dbReference type="Proteomes" id="UP000006637">
    <property type="component" value="Chromosome"/>
</dbReference>
<dbReference type="GO" id="GO:0005737">
    <property type="term" value="C:cytoplasm"/>
    <property type="evidence" value="ECO:0007669"/>
    <property type="project" value="UniProtKB-SubCell"/>
</dbReference>
<dbReference type="GO" id="GO:0005524">
    <property type="term" value="F:ATP binding"/>
    <property type="evidence" value="ECO:0007669"/>
    <property type="project" value="UniProtKB-KW"/>
</dbReference>
<dbReference type="GO" id="GO:0036356">
    <property type="term" value="F:cyclic 2,3-diphosphoglycerate synthetase activity"/>
    <property type="evidence" value="ECO:0007669"/>
    <property type="project" value="InterPro"/>
</dbReference>
<dbReference type="GO" id="GO:0016874">
    <property type="term" value="F:ligase activity"/>
    <property type="evidence" value="ECO:0007669"/>
    <property type="project" value="UniProtKB-UniRule"/>
</dbReference>
<dbReference type="GO" id="GO:0006094">
    <property type="term" value="P:gluconeogenesis"/>
    <property type="evidence" value="ECO:0007669"/>
    <property type="project" value="InterPro"/>
</dbReference>
<dbReference type="HAMAP" id="MF_01908">
    <property type="entry name" value="Cyc_PG_syn"/>
    <property type="match status" value="1"/>
</dbReference>
<dbReference type="InterPro" id="IPR016557">
    <property type="entry name" value="Cyc_diphosphoglycerate_synth"/>
</dbReference>
<dbReference type="PIRSF" id="PIRSF009445">
    <property type="entry name" value="Cyc_PG_syn"/>
    <property type="match status" value="1"/>
</dbReference>
<keyword id="KW-0067">ATP-binding</keyword>
<keyword id="KW-0963">Cytoplasm</keyword>
<keyword id="KW-0436">Ligase</keyword>
<keyword id="KW-0547">Nucleotide-binding</keyword>
<keyword id="KW-1185">Reference proteome</keyword>
<comment type="function">
    <text evidence="1">Catalyzes the formation of cyclic 2,3-diphosphoglycerate (cDPG) by formation of an intramolecular phosphoanhydride bond at the expense of ATP.</text>
</comment>
<comment type="catalytic activity">
    <reaction evidence="1">
        <text>(2R)-2,3-bisphosphoglycerate + ATP + H(+) = cyclic (2R)-2,3-bisphosphoglycerate + ADP + phosphate</text>
        <dbReference type="Rhea" id="RHEA:42412"/>
        <dbReference type="ChEBI" id="CHEBI:15378"/>
        <dbReference type="ChEBI" id="CHEBI:30616"/>
        <dbReference type="ChEBI" id="CHEBI:43474"/>
        <dbReference type="ChEBI" id="CHEBI:58248"/>
        <dbReference type="ChEBI" id="CHEBI:79081"/>
        <dbReference type="ChEBI" id="CHEBI:456216"/>
        <dbReference type="EC" id="6.5.1.9"/>
    </reaction>
</comment>
<comment type="subcellular location">
    <subcellularLocation>
        <location evidence="1">Cytoplasm</location>
    </subcellularLocation>
</comment>
<comment type="similarity">
    <text evidence="1">Belongs to the cyclic 2,3-diphosphoglycerate synthetase family.</text>
</comment>
<proteinExistence type="inferred from homology"/>
<reference key="1">
    <citation type="submission" date="2006-06" db="EMBL/GenBank/DDBJ databases">
        <title>Complete sequence of Rubrobacter xylanophilus DSM 9941.</title>
        <authorList>
            <consortium name="US DOE Joint Genome Institute"/>
            <person name="Copeland A."/>
            <person name="Lucas S."/>
            <person name="Lapidus A."/>
            <person name="Barry K."/>
            <person name="Detter J.C."/>
            <person name="Glavina del Rio T."/>
            <person name="Hammon N."/>
            <person name="Israni S."/>
            <person name="Dalin E."/>
            <person name="Tice H."/>
            <person name="Pitluck S."/>
            <person name="Munk A.C."/>
            <person name="Brettin T."/>
            <person name="Bruce D."/>
            <person name="Han C."/>
            <person name="Tapia R."/>
            <person name="Gilna P."/>
            <person name="Schmutz J."/>
            <person name="Larimer F."/>
            <person name="Land M."/>
            <person name="Hauser L."/>
            <person name="Kyrpides N."/>
            <person name="Lykidis A."/>
            <person name="da Costa M.S."/>
            <person name="Rainey F.A."/>
            <person name="Empadinhas N."/>
            <person name="Jolivet E."/>
            <person name="Battista J.R."/>
            <person name="Richardson P."/>
        </authorList>
    </citation>
    <scope>NUCLEOTIDE SEQUENCE [LARGE SCALE GENOMIC DNA]</scope>
    <source>
        <strain>DSM 9941 / JCM 11954 / NBRC 16129 / PRD-1</strain>
    </source>
</reference>
<name>CPGS_RUBXD</name>